<protein>
    <recommendedName>
        <fullName evidence="1">Ribosomal RNA large subunit methyltransferase K/L</fullName>
    </recommendedName>
    <domain>
        <recommendedName>
            <fullName evidence="1">23S rRNA m2G2445 methyltransferase</fullName>
            <ecNumber evidence="1">2.1.1.173</ecNumber>
        </recommendedName>
        <alternativeName>
            <fullName evidence="1">rRNA (guanine-N(2)-)-methyltransferase RlmL</fullName>
        </alternativeName>
    </domain>
    <domain>
        <recommendedName>
            <fullName evidence="1">23S rRNA m7G2069 methyltransferase</fullName>
            <ecNumber evidence="1">2.1.1.264</ecNumber>
        </recommendedName>
        <alternativeName>
            <fullName evidence="1">rRNA (guanine-N(7)-)-methyltransferase RlmK</fullName>
        </alternativeName>
    </domain>
</protein>
<proteinExistence type="inferred from homology"/>
<comment type="function">
    <text evidence="1">Specifically methylates the guanine in position 2445 (m2G2445) and the guanine in position 2069 (m7G2069) of 23S rRNA.</text>
</comment>
<comment type="catalytic activity">
    <reaction evidence="1">
        <text>guanosine(2445) in 23S rRNA + S-adenosyl-L-methionine = N(2)-methylguanosine(2445) in 23S rRNA + S-adenosyl-L-homocysteine + H(+)</text>
        <dbReference type="Rhea" id="RHEA:42740"/>
        <dbReference type="Rhea" id="RHEA-COMP:10215"/>
        <dbReference type="Rhea" id="RHEA-COMP:10216"/>
        <dbReference type="ChEBI" id="CHEBI:15378"/>
        <dbReference type="ChEBI" id="CHEBI:57856"/>
        <dbReference type="ChEBI" id="CHEBI:59789"/>
        <dbReference type="ChEBI" id="CHEBI:74269"/>
        <dbReference type="ChEBI" id="CHEBI:74481"/>
        <dbReference type="EC" id="2.1.1.173"/>
    </reaction>
</comment>
<comment type="catalytic activity">
    <reaction evidence="1">
        <text>guanosine(2069) in 23S rRNA + S-adenosyl-L-methionine = N(2)-methylguanosine(2069) in 23S rRNA + S-adenosyl-L-homocysteine + H(+)</text>
        <dbReference type="Rhea" id="RHEA:43772"/>
        <dbReference type="Rhea" id="RHEA-COMP:10688"/>
        <dbReference type="Rhea" id="RHEA-COMP:10689"/>
        <dbReference type="ChEBI" id="CHEBI:15378"/>
        <dbReference type="ChEBI" id="CHEBI:57856"/>
        <dbReference type="ChEBI" id="CHEBI:59789"/>
        <dbReference type="ChEBI" id="CHEBI:74269"/>
        <dbReference type="ChEBI" id="CHEBI:74481"/>
        <dbReference type="EC" id="2.1.1.264"/>
    </reaction>
</comment>
<comment type="subcellular location">
    <subcellularLocation>
        <location evidence="1">Cytoplasm</location>
    </subcellularLocation>
</comment>
<comment type="similarity">
    <text evidence="1">Belongs to the methyltransferase superfamily. RlmKL family.</text>
</comment>
<feature type="chain" id="PRO_0000366838" description="Ribosomal RNA large subunit methyltransferase K/L">
    <location>
        <begin position="1"/>
        <end position="702"/>
    </location>
</feature>
<feature type="domain" description="THUMP" evidence="1">
    <location>
        <begin position="43"/>
        <end position="154"/>
    </location>
</feature>
<keyword id="KW-0963">Cytoplasm</keyword>
<keyword id="KW-0489">Methyltransferase</keyword>
<keyword id="KW-1185">Reference proteome</keyword>
<keyword id="KW-0694">RNA-binding</keyword>
<keyword id="KW-0698">rRNA processing</keyword>
<keyword id="KW-0949">S-adenosyl-L-methionine</keyword>
<keyword id="KW-0808">Transferase</keyword>
<organism>
    <name type="scientific">Shigella dysenteriae serotype 1 (strain Sd197)</name>
    <dbReference type="NCBI Taxonomy" id="300267"/>
    <lineage>
        <taxon>Bacteria</taxon>
        <taxon>Pseudomonadati</taxon>
        <taxon>Pseudomonadota</taxon>
        <taxon>Gammaproteobacteria</taxon>
        <taxon>Enterobacterales</taxon>
        <taxon>Enterobacteriaceae</taxon>
        <taxon>Shigella</taxon>
    </lineage>
</organism>
<name>RLMKL_SHIDS</name>
<accession>Q32HV8</accession>
<gene>
    <name evidence="1" type="primary">rlmL</name>
    <name type="ordered locus">SDY_0921</name>
</gene>
<evidence type="ECO:0000255" key="1">
    <source>
        <dbReference type="HAMAP-Rule" id="MF_01858"/>
    </source>
</evidence>
<sequence>MNSLFASTARGLEELLKTELENLGAVECQVVQGGVHFKGDTRLVYQSLMWSRLASRIMLPLGECKVYSDLDLYLGVQAINWTEMFTPGATFAVHFSGLNDTIRNSQYGAMKVKDAIVDAFTRKNLPRPNVDRDAPDIRVNVWLHKETASIALDLSGDGLHLRGYRDRAGIAPIKETLAAAIVMRSGWQPGTPLLDPMCGSGTLLIEAAMLATDRAPGLHRGRWGFSGWAQHDEAIWQEVKAEAQTRSRKGLAEYSSHFYGSDSDARVIQRARTNARLAGIGELITFEVKDVAQLTNPLPKGPYGTVLSNPPYGERLDSEPALIALHSLLGRIMKNQFGGWNLSLFSASPDLLSCLQLRADKQYKAKNGPLDCVQKNYHVAESTPDSKPAMVAEDYANRLRKNLKKFEKWARQDGIECYRLYDADLPEYNVAVDRYADWVVVQEYAPPKTIDAHKARQRLFDIIAATISVLGIAPNKLVLKTRERQKGKNQYQKLGEKGEFLEVTEYNAHLWVNLTDYLDTGLFLDHRIARRMLGQMSKGKDFLNLFSYTGSATVHAGLGGARSTTTVDMSRTYLEWAERNLRLNGLTGRTHRLIQADCLAWLREANEQFDLIFIDPPTFSNSKRMEDAFDVQRDHLALMKDLKRLLRAGGTIMFSNNKRGFRMDLDGLAKLGLKAQEITQKTLSQDFARNRQIHNCWLITAA</sequence>
<reference key="1">
    <citation type="journal article" date="2005" name="Nucleic Acids Res.">
        <title>Genome dynamics and diversity of Shigella species, the etiologic agents of bacillary dysentery.</title>
        <authorList>
            <person name="Yang F."/>
            <person name="Yang J."/>
            <person name="Zhang X."/>
            <person name="Chen L."/>
            <person name="Jiang Y."/>
            <person name="Yan Y."/>
            <person name="Tang X."/>
            <person name="Wang J."/>
            <person name="Xiong Z."/>
            <person name="Dong J."/>
            <person name="Xue Y."/>
            <person name="Zhu Y."/>
            <person name="Xu X."/>
            <person name="Sun L."/>
            <person name="Chen S."/>
            <person name="Nie H."/>
            <person name="Peng J."/>
            <person name="Xu J."/>
            <person name="Wang Y."/>
            <person name="Yuan Z."/>
            <person name="Wen Y."/>
            <person name="Yao Z."/>
            <person name="Shen Y."/>
            <person name="Qiang B."/>
            <person name="Hou Y."/>
            <person name="Yu J."/>
            <person name="Jin Q."/>
        </authorList>
    </citation>
    <scope>NUCLEOTIDE SEQUENCE [LARGE SCALE GENOMIC DNA]</scope>
    <source>
        <strain>Sd197</strain>
    </source>
</reference>
<dbReference type="EC" id="2.1.1.173" evidence="1"/>
<dbReference type="EC" id="2.1.1.264" evidence="1"/>
<dbReference type="EMBL" id="CP000034">
    <property type="protein sequence ID" value="ABB61097.1"/>
    <property type="molecule type" value="Genomic_DNA"/>
</dbReference>
<dbReference type="RefSeq" id="WP_001086562.1">
    <property type="nucleotide sequence ID" value="NC_007606.1"/>
</dbReference>
<dbReference type="RefSeq" id="YP_402588.1">
    <property type="nucleotide sequence ID" value="NC_007606.1"/>
</dbReference>
<dbReference type="SMR" id="Q32HV8"/>
<dbReference type="STRING" id="300267.SDY_0921"/>
<dbReference type="EnsemblBacteria" id="ABB61097">
    <property type="protein sequence ID" value="ABB61097"/>
    <property type="gene ID" value="SDY_0921"/>
</dbReference>
<dbReference type="KEGG" id="sdy:SDY_0921"/>
<dbReference type="PATRIC" id="fig|300267.13.peg.1067"/>
<dbReference type="HOGENOM" id="CLU_014042_2_0_6"/>
<dbReference type="Proteomes" id="UP000002716">
    <property type="component" value="Chromosome"/>
</dbReference>
<dbReference type="GO" id="GO:0005737">
    <property type="term" value="C:cytoplasm"/>
    <property type="evidence" value="ECO:0007669"/>
    <property type="project" value="UniProtKB-SubCell"/>
</dbReference>
<dbReference type="GO" id="GO:0052915">
    <property type="term" value="F:23S rRNA (guanine(2445)-N(2))-methyltransferase activity"/>
    <property type="evidence" value="ECO:0007669"/>
    <property type="project" value="UniProtKB-UniRule"/>
</dbReference>
<dbReference type="GO" id="GO:0003723">
    <property type="term" value="F:RNA binding"/>
    <property type="evidence" value="ECO:0007669"/>
    <property type="project" value="UniProtKB-KW"/>
</dbReference>
<dbReference type="GO" id="GO:0070043">
    <property type="term" value="F:rRNA (guanine-N7-)-methyltransferase activity"/>
    <property type="evidence" value="ECO:0007669"/>
    <property type="project" value="UniProtKB-UniRule"/>
</dbReference>
<dbReference type="CDD" id="cd02440">
    <property type="entry name" value="AdoMet_MTases"/>
    <property type="match status" value="1"/>
</dbReference>
<dbReference type="CDD" id="cd11715">
    <property type="entry name" value="THUMP_AdoMetMT"/>
    <property type="match status" value="1"/>
</dbReference>
<dbReference type="FunFam" id="3.30.750.80:FF:000001">
    <property type="entry name" value="Ribosomal RNA large subunit methyltransferase K/L"/>
    <property type="match status" value="1"/>
</dbReference>
<dbReference type="FunFam" id="3.40.50.150:FF:000039">
    <property type="entry name" value="Ribosomal RNA large subunit methyltransferase K/L"/>
    <property type="match status" value="1"/>
</dbReference>
<dbReference type="Gene3D" id="3.30.2130.30">
    <property type="match status" value="1"/>
</dbReference>
<dbReference type="Gene3D" id="3.30.750.80">
    <property type="entry name" value="RNA methyltransferase domain (HRMD) like"/>
    <property type="match status" value="1"/>
</dbReference>
<dbReference type="Gene3D" id="3.40.50.150">
    <property type="entry name" value="Vaccinia Virus protein VP39"/>
    <property type="match status" value="2"/>
</dbReference>
<dbReference type="HAMAP" id="MF_01858">
    <property type="entry name" value="23SrRNA_methyltr_KL"/>
    <property type="match status" value="1"/>
</dbReference>
<dbReference type="InterPro" id="IPR017244">
    <property type="entry name" value="23SrRNA_methyltr_KL"/>
</dbReference>
<dbReference type="InterPro" id="IPR002052">
    <property type="entry name" value="DNA_methylase_N6_adenine_CS"/>
</dbReference>
<dbReference type="InterPro" id="IPR000241">
    <property type="entry name" value="RlmKL-like_Mtase"/>
</dbReference>
<dbReference type="InterPro" id="IPR053943">
    <property type="entry name" value="RlmKL-like_Mtase_CS"/>
</dbReference>
<dbReference type="InterPro" id="IPR054170">
    <property type="entry name" value="RlmL_1st"/>
</dbReference>
<dbReference type="InterPro" id="IPR019614">
    <property type="entry name" value="SAM-dep_methyl-trfase"/>
</dbReference>
<dbReference type="InterPro" id="IPR029063">
    <property type="entry name" value="SAM-dependent_MTases_sf"/>
</dbReference>
<dbReference type="InterPro" id="IPR004114">
    <property type="entry name" value="THUMP_dom"/>
</dbReference>
<dbReference type="NCBIfam" id="NF008748">
    <property type="entry name" value="PRK11783.1"/>
    <property type="match status" value="1"/>
</dbReference>
<dbReference type="PANTHER" id="PTHR47313">
    <property type="entry name" value="RIBOSOMAL RNA LARGE SUBUNIT METHYLTRANSFERASE K/L"/>
    <property type="match status" value="1"/>
</dbReference>
<dbReference type="PANTHER" id="PTHR47313:SF1">
    <property type="entry name" value="RIBOSOMAL RNA LARGE SUBUNIT METHYLTRANSFERASE K_L"/>
    <property type="match status" value="1"/>
</dbReference>
<dbReference type="Pfam" id="PF10672">
    <property type="entry name" value="Methyltrans_SAM"/>
    <property type="match status" value="1"/>
</dbReference>
<dbReference type="Pfam" id="PF22020">
    <property type="entry name" value="RlmL_1st"/>
    <property type="match status" value="1"/>
</dbReference>
<dbReference type="Pfam" id="PF02926">
    <property type="entry name" value="THUMP"/>
    <property type="match status" value="1"/>
</dbReference>
<dbReference type="Pfam" id="PF01170">
    <property type="entry name" value="UPF0020"/>
    <property type="match status" value="1"/>
</dbReference>
<dbReference type="PIRSF" id="PIRSF037618">
    <property type="entry name" value="RNA_Mtase_bacteria_prd"/>
    <property type="match status" value="1"/>
</dbReference>
<dbReference type="PRINTS" id="PR00507">
    <property type="entry name" value="N12N6MTFRASE"/>
</dbReference>
<dbReference type="SMART" id="SM00981">
    <property type="entry name" value="THUMP"/>
    <property type="match status" value="1"/>
</dbReference>
<dbReference type="SUPFAM" id="SSF53335">
    <property type="entry name" value="S-adenosyl-L-methionine-dependent methyltransferases"/>
    <property type="match status" value="2"/>
</dbReference>
<dbReference type="PROSITE" id="PS51165">
    <property type="entry name" value="THUMP"/>
    <property type="match status" value="1"/>
</dbReference>
<dbReference type="PROSITE" id="PS01261">
    <property type="entry name" value="UPF0020"/>
    <property type="match status" value="1"/>
</dbReference>